<protein>
    <recommendedName>
        <fullName evidence="1">Homoserine O-acetyltransferase</fullName>
        <shortName evidence="1">HAT</shortName>
        <ecNumber evidence="1">2.3.1.31</ecNumber>
    </recommendedName>
    <alternativeName>
        <fullName evidence="1">Homoserine transacetylase</fullName>
        <shortName evidence="1">HTA</shortName>
    </alternativeName>
</protein>
<reference key="1">
    <citation type="journal article" date="2009" name="Proc. Natl. Acad. Sci. U.S.A.">
        <title>Characterizing a model human gut microbiota composed of members of its two dominant bacterial phyla.</title>
        <authorList>
            <person name="Mahowald M.A."/>
            <person name="Rey F.E."/>
            <person name="Seedorf H."/>
            <person name="Turnbaugh P.J."/>
            <person name="Fulton R.S."/>
            <person name="Wollam A."/>
            <person name="Shah N."/>
            <person name="Wang C."/>
            <person name="Magrini V."/>
            <person name="Wilson R.K."/>
            <person name="Cantarel B.L."/>
            <person name="Coutinho P.M."/>
            <person name="Henrissat B."/>
            <person name="Crock L.W."/>
            <person name="Russell A."/>
            <person name="Verberkmoes N.C."/>
            <person name="Hettich R.L."/>
            <person name="Gordon J.I."/>
        </authorList>
    </citation>
    <scope>NUCLEOTIDE SEQUENCE [LARGE SCALE GENOMIC DNA]</scope>
    <source>
        <strain>ATCC 27750 / DSM 3376 / VPI C15-48 / C15-B4</strain>
    </source>
</reference>
<comment type="function">
    <text evidence="1">Transfers an acetyl group from acetyl-CoA to L-homoserine, forming acetyl-L-homoserine.</text>
</comment>
<comment type="catalytic activity">
    <reaction evidence="1">
        <text>L-homoserine + acetyl-CoA = O-acetyl-L-homoserine + CoA</text>
        <dbReference type="Rhea" id="RHEA:13701"/>
        <dbReference type="ChEBI" id="CHEBI:57287"/>
        <dbReference type="ChEBI" id="CHEBI:57288"/>
        <dbReference type="ChEBI" id="CHEBI:57476"/>
        <dbReference type="ChEBI" id="CHEBI:57716"/>
        <dbReference type="EC" id="2.3.1.31"/>
    </reaction>
</comment>
<comment type="pathway">
    <text evidence="1">Amino-acid biosynthesis; L-methionine biosynthesis via de novo pathway; O-acetyl-L-homoserine from L-homoserine: step 1/1.</text>
</comment>
<comment type="subcellular location">
    <subcellularLocation>
        <location evidence="1">Cytoplasm</location>
    </subcellularLocation>
</comment>
<comment type="similarity">
    <text evidence="1">Belongs to the MetA family.</text>
</comment>
<accession>C4Z0T6</accession>
<feature type="chain" id="PRO_1000204921" description="Homoserine O-acetyltransferase">
    <location>
        <begin position="1"/>
        <end position="310"/>
    </location>
</feature>
<feature type="active site" description="Acyl-thioester intermediate" evidence="1">
    <location>
        <position position="142"/>
    </location>
</feature>
<feature type="active site" description="Proton acceptor" evidence="1">
    <location>
        <position position="235"/>
    </location>
</feature>
<feature type="active site" evidence="1">
    <location>
        <position position="237"/>
    </location>
</feature>
<feature type="binding site" evidence="1">
    <location>
        <position position="163"/>
    </location>
    <ligand>
        <name>substrate</name>
    </ligand>
</feature>
<feature type="binding site" evidence="1">
    <location>
        <position position="192"/>
    </location>
    <ligand>
        <name>substrate</name>
    </ligand>
</feature>
<feature type="binding site" evidence="1">
    <location>
        <position position="249"/>
    </location>
    <ligand>
        <name>substrate</name>
    </ligand>
</feature>
<feature type="site" description="Important for acyl-CoA specificity" evidence="1">
    <location>
        <position position="111"/>
    </location>
</feature>
<feature type="site" description="Important for substrate specificity" evidence="1">
    <location>
        <position position="192"/>
    </location>
</feature>
<evidence type="ECO:0000255" key="1">
    <source>
        <dbReference type="HAMAP-Rule" id="MF_00295"/>
    </source>
</evidence>
<name>METAA_LACE2</name>
<proteinExistence type="inferred from homology"/>
<sequence length="310" mass="36167">MPIKIQSDLPAKAELEEENIFVMDENRAISQNIRPLEIIVLNLMPIKQDTELQLLRGLSNTPLQIDVTFLQMSSHVSKNTSASHIKKFYQTFEEIKNNNYDGMIITGAPVEKLDFEEVNYWDELITVMEWSNKHVTSTIHICWGAQAGLYYHYGIKKELLPKKLSGVYKHRVMNRKEPLVRGFDDVFMAPHSRYTQASRQQILDNPRLKVLADSDEAGIYIVLGDGGKEIFVMGHPEYDRLTLDQEYKRDIDKGIEPDLPVNYYPDDDCNRKPLLSWRSHANNLYTNWLNYYVYQITPYDLNESYDNYCI</sequence>
<organism>
    <name type="scientific">Lachnospira eligens (strain ATCC 27750 / DSM 3376 / VPI C15-48 / C15-B4)</name>
    <name type="common">Eubacterium eligens</name>
    <dbReference type="NCBI Taxonomy" id="515620"/>
    <lineage>
        <taxon>Bacteria</taxon>
        <taxon>Bacillati</taxon>
        <taxon>Bacillota</taxon>
        <taxon>Clostridia</taxon>
        <taxon>Lachnospirales</taxon>
        <taxon>Lachnospiraceae</taxon>
        <taxon>Lachnospira</taxon>
    </lineage>
</organism>
<keyword id="KW-0012">Acyltransferase</keyword>
<keyword id="KW-0028">Amino-acid biosynthesis</keyword>
<keyword id="KW-0963">Cytoplasm</keyword>
<keyword id="KW-0486">Methionine biosynthesis</keyword>
<keyword id="KW-1185">Reference proteome</keyword>
<keyword id="KW-0808">Transferase</keyword>
<dbReference type="EC" id="2.3.1.31" evidence="1"/>
<dbReference type="EMBL" id="CP001104">
    <property type="protein sequence ID" value="ACR72199.1"/>
    <property type="molecule type" value="Genomic_DNA"/>
</dbReference>
<dbReference type="RefSeq" id="WP_012739434.1">
    <property type="nucleotide sequence ID" value="NC_012778.1"/>
</dbReference>
<dbReference type="SMR" id="C4Z0T6"/>
<dbReference type="STRING" id="515620.EUBELI_01200"/>
<dbReference type="GeneID" id="41355921"/>
<dbReference type="KEGG" id="eel:EUBELI_01200"/>
<dbReference type="eggNOG" id="COG1897">
    <property type="taxonomic scope" value="Bacteria"/>
</dbReference>
<dbReference type="HOGENOM" id="CLU_057851_0_1_9"/>
<dbReference type="UniPathway" id="UPA00051">
    <property type="reaction ID" value="UER00074"/>
</dbReference>
<dbReference type="Proteomes" id="UP000001476">
    <property type="component" value="Chromosome"/>
</dbReference>
<dbReference type="GO" id="GO:0005737">
    <property type="term" value="C:cytoplasm"/>
    <property type="evidence" value="ECO:0007669"/>
    <property type="project" value="UniProtKB-SubCell"/>
</dbReference>
<dbReference type="GO" id="GO:0004414">
    <property type="term" value="F:homoserine O-acetyltransferase activity"/>
    <property type="evidence" value="ECO:0007669"/>
    <property type="project" value="UniProtKB-EC"/>
</dbReference>
<dbReference type="GO" id="GO:0008899">
    <property type="term" value="F:homoserine O-succinyltransferase activity"/>
    <property type="evidence" value="ECO:0007669"/>
    <property type="project" value="UniProtKB-UniRule"/>
</dbReference>
<dbReference type="GO" id="GO:0019281">
    <property type="term" value="P:L-methionine biosynthetic process from homoserine via O-succinyl-L-homoserine and cystathionine"/>
    <property type="evidence" value="ECO:0007669"/>
    <property type="project" value="InterPro"/>
</dbReference>
<dbReference type="CDD" id="cd03131">
    <property type="entry name" value="GATase1_HTS"/>
    <property type="match status" value="1"/>
</dbReference>
<dbReference type="FunFam" id="3.40.50.880:FF:000004">
    <property type="entry name" value="Homoserine O-succinyltransferase"/>
    <property type="match status" value="1"/>
</dbReference>
<dbReference type="Gene3D" id="3.40.50.880">
    <property type="match status" value="1"/>
</dbReference>
<dbReference type="HAMAP" id="MF_00295">
    <property type="entry name" value="MetA_acyltransf"/>
    <property type="match status" value="1"/>
</dbReference>
<dbReference type="InterPro" id="IPR029062">
    <property type="entry name" value="Class_I_gatase-like"/>
</dbReference>
<dbReference type="InterPro" id="IPR005697">
    <property type="entry name" value="HST_MetA"/>
</dbReference>
<dbReference type="InterPro" id="IPR033752">
    <property type="entry name" value="MetA_family"/>
</dbReference>
<dbReference type="NCBIfam" id="TIGR01001">
    <property type="entry name" value="metA"/>
    <property type="match status" value="1"/>
</dbReference>
<dbReference type="PANTHER" id="PTHR20919">
    <property type="entry name" value="HOMOSERINE O-SUCCINYLTRANSFERASE"/>
    <property type="match status" value="1"/>
</dbReference>
<dbReference type="PANTHER" id="PTHR20919:SF0">
    <property type="entry name" value="HOMOSERINE O-SUCCINYLTRANSFERASE"/>
    <property type="match status" value="1"/>
</dbReference>
<dbReference type="Pfam" id="PF04204">
    <property type="entry name" value="HTS"/>
    <property type="match status" value="1"/>
</dbReference>
<dbReference type="PIRSF" id="PIRSF000450">
    <property type="entry name" value="H_ser_succinyltr"/>
    <property type="match status" value="1"/>
</dbReference>
<dbReference type="SUPFAM" id="SSF52317">
    <property type="entry name" value="Class I glutamine amidotransferase-like"/>
    <property type="match status" value="1"/>
</dbReference>
<gene>
    <name evidence="1" type="primary">metAA</name>
    <name type="ordered locus">EUBELI_01200</name>
</gene>